<name>RBM12_MOUSE</name>
<keyword id="KW-0002">3D-structure</keyword>
<keyword id="KW-0539">Nucleus</keyword>
<keyword id="KW-0597">Phosphoprotein</keyword>
<keyword id="KW-1185">Reference proteome</keyword>
<keyword id="KW-0677">Repeat</keyword>
<keyword id="KW-0694">RNA-binding</keyword>
<reference key="1">
    <citation type="submission" date="2001-06" db="EMBL/GenBank/DDBJ databases">
        <title>Identification of SWAN as a novel hnRNP-like adaptor protein with multiple domains and broadly expressed in mammalian tissues.</title>
        <authorList>
            <person name="Huang C.-H."/>
        </authorList>
    </citation>
    <scope>NUCLEOTIDE SEQUENCE [MRNA]</scope>
</reference>
<reference key="2">
    <citation type="journal article" date="2005" name="Science">
        <title>The transcriptional landscape of the mammalian genome.</title>
        <authorList>
            <person name="Carninci P."/>
            <person name="Kasukawa T."/>
            <person name="Katayama S."/>
            <person name="Gough J."/>
            <person name="Frith M.C."/>
            <person name="Maeda N."/>
            <person name="Oyama R."/>
            <person name="Ravasi T."/>
            <person name="Lenhard B."/>
            <person name="Wells C."/>
            <person name="Kodzius R."/>
            <person name="Shimokawa K."/>
            <person name="Bajic V.B."/>
            <person name="Brenner S.E."/>
            <person name="Batalov S."/>
            <person name="Forrest A.R."/>
            <person name="Zavolan M."/>
            <person name="Davis M.J."/>
            <person name="Wilming L.G."/>
            <person name="Aidinis V."/>
            <person name="Allen J.E."/>
            <person name="Ambesi-Impiombato A."/>
            <person name="Apweiler R."/>
            <person name="Aturaliya R.N."/>
            <person name="Bailey T.L."/>
            <person name="Bansal M."/>
            <person name="Baxter L."/>
            <person name="Beisel K.W."/>
            <person name="Bersano T."/>
            <person name="Bono H."/>
            <person name="Chalk A.M."/>
            <person name="Chiu K.P."/>
            <person name="Choudhary V."/>
            <person name="Christoffels A."/>
            <person name="Clutterbuck D.R."/>
            <person name="Crowe M.L."/>
            <person name="Dalla E."/>
            <person name="Dalrymple B.P."/>
            <person name="de Bono B."/>
            <person name="Della Gatta G."/>
            <person name="di Bernardo D."/>
            <person name="Down T."/>
            <person name="Engstrom P."/>
            <person name="Fagiolini M."/>
            <person name="Faulkner G."/>
            <person name="Fletcher C.F."/>
            <person name="Fukushima T."/>
            <person name="Furuno M."/>
            <person name="Futaki S."/>
            <person name="Gariboldi M."/>
            <person name="Georgii-Hemming P."/>
            <person name="Gingeras T.R."/>
            <person name="Gojobori T."/>
            <person name="Green R.E."/>
            <person name="Gustincich S."/>
            <person name="Harbers M."/>
            <person name="Hayashi Y."/>
            <person name="Hensch T.K."/>
            <person name="Hirokawa N."/>
            <person name="Hill D."/>
            <person name="Huminiecki L."/>
            <person name="Iacono M."/>
            <person name="Ikeo K."/>
            <person name="Iwama A."/>
            <person name="Ishikawa T."/>
            <person name="Jakt M."/>
            <person name="Kanapin A."/>
            <person name="Katoh M."/>
            <person name="Kawasawa Y."/>
            <person name="Kelso J."/>
            <person name="Kitamura H."/>
            <person name="Kitano H."/>
            <person name="Kollias G."/>
            <person name="Krishnan S.P."/>
            <person name="Kruger A."/>
            <person name="Kummerfeld S.K."/>
            <person name="Kurochkin I.V."/>
            <person name="Lareau L.F."/>
            <person name="Lazarevic D."/>
            <person name="Lipovich L."/>
            <person name="Liu J."/>
            <person name="Liuni S."/>
            <person name="McWilliam S."/>
            <person name="Madan Babu M."/>
            <person name="Madera M."/>
            <person name="Marchionni L."/>
            <person name="Matsuda H."/>
            <person name="Matsuzawa S."/>
            <person name="Miki H."/>
            <person name="Mignone F."/>
            <person name="Miyake S."/>
            <person name="Morris K."/>
            <person name="Mottagui-Tabar S."/>
            <person name="Mulder N."/>
            <person name="Nakano N."/>
            <person name="Nakauchi H."/>
            <person name="Ng P."/>
            <person name="Nilsson R."/>
            <person name="Nishiguchi S."/>
            <person name="Nishikawa S."/>
            <person name="Nori F."/>
            <person name="Ohara O."/>
            <person name="Okazaki Y."/>
            <person name="Orlando V."/>
            <person name="Pang K.C."/>
            <person name="Pavan W.J."/>
            <person name="Pavesi G."/>
            <person name="Pesole G."/>
            <person name="Petrovsky N."/>
            <person name="Piazza S."/>
            <person name="Reed J."/>
            <person name="Reid J.F."/>
            <person name="Ring B.Z."/>
            <person name="Ringwald M."/>
            <person name="Rost B."/>
            <person name="Ruan Y."/>
            <person name="Salzberg S.L."/>
            <person name="Sandelin A."/>
            <person name="Schneider C."/>
            <person name="Schoenbach C."/>
            <person name="Sekiguchi K."/>
            <person name="Semple C.A."/>
            <person name="Seno S."/>
            <person name="Sessa L."/>
            <person name="Sheng Y."/>
            <person name="Shibata Y."/>
            <person name="Shimada H."/>
            <person name="Shimada K."/>
            <person name="Silva D."/>
            <person name="Sinclair B."/>
            <person name="Sperling S."/>
            <person name="Stupka E."/>
            <person name="Sugiura K."/>
            <person name="Sultana R."/>
            <person name="Takenaka Y."/>
            <person name="Taki K."/>
            <person name="Tammoja K."/>
            <person name="Tan S.L."/>
            <person name="Tang S."/>
            <person name="Taylor M.S."/>
            <person name="Tegner J."/>
            <person name="Teichmann S.A."/>
            <person name="Ueda H.R."/>
            <person name="van Nimwegen E."/>
            <person name="Verardo R."/>
            <person name="Wei C.L."/>
            <person name="Yagi K."/>
            <person name="Yamanishi H."/>
            <person name="Zabarovsky E."/>
            <person name="Zhu S."/>
            <person name="Zimmer A."/>
            <person name="Hide W."/>
            <person name="Bult C."/>
            <person name="Grimmond S.M."/>
            <person name="Teasdale R.D."/>
            <person name="Liu E.T."/>
            <person name="Brusic V."/>
            <person name="Quackenbush J."/>
            <person name="Wahlestedt C."/>
            <person name="Mattick J.S."/>
            <person name="Hume D.A."/>
            <person name="Kai C."/>
            <person name="Sasaki D."/>
            <person name="Tomaru Y."/>
            <person name="Fukuda S."/>
            <person name="Kanamori-Katayama M."/>
            <person name="Suzuki M."/>
            <person name="Aoki J."/>
            <person name="Arakawa T."/>
            <person name="Iida J."/>
            <person name="Imamura K."/>
            <person name="Itoh M."/>
            <person name="Kato T."/>
            <person name="Kawaji H."/>
            <person name="Kawagashira N."/>
            <person name="Kawashima T."/>
            <person name="Kojima M."/>
            <person name="Kondo S."/>
            <person name="Konno H."/>
            <person name="Nakano K."/>
            <person name="Ninomiya N."/>
            <person name="Nishio T."/>
            <person name="Okada M."/>
            <person name="Plessy C."/>
            <person name="Shibata K."/>
            <person name="Shiraki T."/>
            <person name="Suzuki S."/>
            <person name="Tagami M."/>
            <person name="Waki K."/>
            <person name="Watahiki A."/>
            <person name="Okamura-Oho Y."/>
            <person name="Suzuki H."/>
            <person name="Kawai J."/>
            <person name="Hayashizaki Y."/>
        </authorList>
    </citation>
    <scope>NUCLEOTIDE SEQUENCE [LARGE SCALE MRNA]</scope>
    <source>
        <strain>C57BL/6J</strain>
        <tissue>Blastocyst</tissue>
        <tissue>Embryo</tissue>
        <tissue>Head</tissue>
    </source>
</reference>
<reference key="3">
    <citation type="journal article" date="2009" name="PLoS Biol.">
        <title>Lineage-specific biology revealed by a finished genome assembly of the mouse.</title>
        <authorList>
            <person name="Church D.M."/>
            <person name="Goodstadt L."/>
            <person name="Hillier L.W."/>
            <person name="Zody M.C."/>
            <person name="Goldstein S."/>
            <person name="She X."/>
            <person name="Bult C.J."/>
            <person name="Agarwala R."/>
            <person name="Cherry J.L."/>
            <person name="DiCuccio M."/>
            <person name="Hlavina W."/>
            <person name="Kapustin Y."/>
            <person name="Meric P."/>
            <person name="Maglott D."/>
            <person name="Birtle Z."/>
            <person name="Marques A.C."/>
            <person name="Graves T."/>
            <person name="Zhou S."/>
            <person name="Teague B."/>
            <person name="Potamousis K."/>
            <person name="Churas C."/>
            <person name="Place M."/>
            <person name="Herschleb J."/>
            <person name="Runnheim R."/>
            <person name="Forrest D."/>
            <person name="Amos-Landgraf J."/>
            <person name="Schwartz D.C."/>
            <person name="Cheng Z."/>
            <person name="Lindblad-Toh K."/>
            <person name="Eichler E.E."/>
            <person name="Ponting C.P."/>
        </authorList>
    </citation>
    <scope>NUCLEOTIDE SEQUENCE [LARGE SCALE GENOMIC DNA]</scope>
    <source>
        <strain>C57BL/6J</strain>
    </source>
</reference>
<reference key="4">
    <citation type="journal article" date="2004" name="Genome Res.">
        <title>The status, quality, and expansion of the NIH full-length cDNA project: the Mammalian Gene Collection (MGC).</title>
        <authorList>
            <consortium name="The MGC Project Team"/>
        </authorList>
    </citation>
    <scope>NUCLEOTIDE SEQUENCE [LARGE SCALE MRNA]</scope>
    <source>
        <strain>C57BL/6J</strain>
        <tissue>Brain</tissue>
        <tissue>Mammary tumor</tissue>
    </source>
</reference>
<reference key="5">
    <citation type="journal article" date="2010" name="Cell">
        <title>A tissue-specific atlas of mouse protein phosphorylation and expression.</title>
        <authorList>
            <person name="Huttlin E.L."/>
            <person name="Jedrychowski M.P."/>
            <person name="Elias J.E."/>
            <person name="Goswami T."/>
            <person name="Rad R."/>
            <person name="Beausoleil S.A."/>
            <person name="Villen J."/>
            <person name="Haas W."/>
            <person name="Sowa M.E."/>
            <person name="Gygi S.P."/>
        </authorList>
    </citation>
    <scope>IDENTIFICATION BY MASS SPECTROMETRY [LARGE SCALE ANALYSIS]</scope>
    <source>
        <tissue>Kidney</tissue>
        <tissue>Lung</tissue>
        <tissue>Pancreas</tissue>
    </source>
</reference>
<reference key="6">
    <citation type="submission" date="2005-11" db="PDB data bank">
        <title>Solution structure of the RNA binding domain of RNA-binding protein 12.</title>
        <authorList>
            <consortium name="RIKEN structural genomics initiative (RSGI)"/>
        </authorList>
    </citation>
    <scope>STRUCTURE BY NMR OF 908-992</scope>
</reference>
<feature type="chain" id="PRO_0000081772" description="RNA-binding protein 12">
    <location>
        <begin position="1"/>
        <end position="992"/>
    </location>
</feature>
<feature type="domain" description="RRM 1" evidence="3">
    <location>
        <begin position="304"/>
        <end position="379"/>
    </location>
</feature>
<feature type="domain" description="RRM 2" evidence="3">
    <location>
        <begin position="430"/>
        <end position="507"/>
    </location>
</feature>
<feature type="domain" description="RRM 3" evidence="3">
    <location>
        <begin position="916"/>
        <end position="992"/>
    </location>
</feature>
<feature type="region of interest" description="Disordered" evidence="4">
    <location>
        <begin position="393"/>
        <end position="424"/>
    </location>
</feature>
<feature type="region of interest" description="Disordered" evidence="4">
    <location>
        <begin position="849"/>
        <end position="913"/>
    </location>
</feature>
<feature type="compositionally biased region" description="Polar residues" evidence="4">
    <location>
        <begin position="408"/>
        <end position="417"/>
    </location>
</feature>
<feature type="compositionally biased region" description="Low complexity" evidence="4">
    <location>
        <begin position="876"/>
        <end position="887"/>
    </location>
</feature>
<feature type="modified residue" description="Phosphoserine" evidence="2">
    <location>
        <position position="352"/>
    </location>
</feature>
<feature type="modified residue" description="Phosphoserine" evidence="2">
    <location>
        <position position="375"/>
    </location>
</feature>
<feature type="modified residue" description="Phosphoserine" evidence="2">
    <location>
        <position position="420"/>
    </location>
</feature>
<feature type="modified residue" description="Phosphoserine" evidence="2">
    <location>
        <position position="422"/>
    </location>
</feature>
<feature type="modified residue" description="Phosphoserine" evidence="2">
    <location>
        <position position="424"/>
    </location>
</feature>
<feature type="modified residue" description="Phosphoserine" evidence="2">
    <location>
        <position position="525"/>
    </location>
</feature>
<feature type="sequence conflict" description="In Ref. 1; AAL83754/AAM73683/AAM73684 and 4; AAH26891." evidence="5" ref="1 4">
    <original>I</original>
    <variation>T</variation>
    <location>
        <position position="122"/>
    </location>
</feature>
<feature type="sequence conflict" description="In Ref. 1; AAL83754/AAM73683/AAM73684 and 4; AAH26891." evidence="5" ref="1 4">
    <original>S</original>
    <variation>N</variation>
    <location>
        <position position="572"/>
    </location>
</feature>
<feature type="sequence conflict" description="In Ref. 2; BAC28911." evidence="5" ref="2">
    <original>G</original>
    <variation>S</variation>
    <location>
        <position position="719"/>
    </location>
</feature>
<feature type="sequence conflict" description="In Ref. 2; BAB30825." evidence="5" ref="2">
    <original>G</original>
    <variation>S</variation>
    <location>
        <position position="729"/>
    </location>
</feature>
<feature type="sequence conflict" description="In Ref. 2; BAB30825." evidence="5" ref="2">
    <original>G</original>
    <variation>C</variation>
    <location>
        <position position="739"/>
    </location>
</feature>
<feature type="sequence conflict" description="In Ref. 2; BAC26338." evidence="5" ref="2">
    <original>A</original>
    <variation>AIPGPA</variation>
    <location>
        <position position="756"/>
    </location>
</feature>
<feature type="sequence conflict" description="In Ref. 1; AAL83754/AAM73683/AAM73684 and 4; AAH26891/AAH27810." evidence="5" ref="1 4">
    <original>A</original>
    <variation>AIPGPAIPGPT</variation>
    <location>
        <position position="756"/>
    </location>
</feature>
<feature type="sequence conflict" description="In Ref. 1; AAL83754/AAM73683/AAM73684." evidence="5" ref="1">
    <original>G</original>
    <variation>GGG</variation>
    <location>
        <position position="808"/>
    </location>
</feature>
<feature type="sequence conflict" description="In Ref. 1; AAL83754/AAM73683/AAM73684." evidence="5" ref="1">
    <original>V</original>
    <variation>A</variation>
    <location>
        <position position="814"/>
    </location>
</feature>
<feature type="sequence conflict" description="In Ref. 1; AAL83754/AAM73683/AAM73684." evidence="5" ref="1">
    <original>V</original>
    <variation>G</variation>
    <location>
        <position position="817"/>
    </location>
</feature>
<feature type="sequence conflict" description="In Ref. 1; AAL83754/AAM73683/AAM73684." evidence="5" ref="1">
    <original>E</original>
    <variation>D</variation>
    <location>
        <position position="832"/>
    </location>
</feature>
<feature type="sequence conflict" description="In Ref. 1; AAL83754/AAM73683/AAM73684." evidence="5" ref="1">
    <original>AP</original>
    <variation>G</variation>
    <location>
        <begin position="839"/>
        <end position="840"/>
    </location>
</feature>
<feature type="sequence conflict" description="In Ref. 1; AAL83754/AAM73683/AAM73684." evidence="5" ref="1">
    <original>P</original>
    <variation>L</variation>
    <location>
        <position position="897"/>
    </location>
</feature>
<feature type="strand" evidence="6">
    <location>
        <begin position="914"/>
        <end position="922"/>
    </location>
</feature>
<feature type="helix" evidence="6">
    <location>
        <begin position="929"/>
        <end position="935"/>
    </location>
</feature>
<feature type="turn" evidence="6">
    <location>
        <begin position="936"/>
        <end position="938"/>
    </location>
</feature>
<feature type="turn" evidence="6">
    <location>
        <begin position="943"/>
        <end position="945"/>
    </location>
</feature>
<feature type="strand" evidence="6">
    <location>
        <begin position="947"/>
        <end position="950"/>
    </location>
</feature>
<feature type="strand" evidence="6">
    <location>
        <begin position="952"/>
        <end position="954"/>
    </location>
</feature>
<feature type="strand" evidence="6">
    <location>
        <begin position="956"/>
        <end position="965"/>
    </location>
</feature>
<feature type="helix" evidence="6">
    <location>
        <begin position="967"/>
        <end position="976"/>
    </location>
</feature>
<feature type="turn" evidence="6">
    <location>
        <begin position="977"/>
        <end position="979"/>
    </location>
</feature>
<feature type="strand" evidence="6">
    <location>
        <begin position="988"/>
        <end position="992"/>
    </location>
</feature>
<organism>
    <name type="scientific">Mus musculus</name>
    <name type="common">Mouse</name>
    <dbReference type="NCBI Taxonomy" id="10090"/>
    <lineage>
        <taxon>Eukaryota</taxon>
        <taxon>Metazoa</taxon>
        <taxon>Chordata</taxon>
        <taxon>Craniata</taxon>
        <taxon>Vertebrata</taxon>
        <taxon>Euteleostomi</taxon>
        <taxon>Mammalia</taxon>
        <taxon>Eutheria</taxon>
        <taxon>Euarchontoglires</taxon>
        <taxon>Glires</taxon>
        <taxon>Rodentia</taxon>
        <taxon>Myomorpha</taxon>
        <taxon>Muroidea</taxon>
        <taxon>Muridae</taxon>
        <taxon>Murinae</taxon>
        <taxon>Mus</taxon>
        <taxon>Mus</taxon>
    </lineage>
</organism>
<accession>Q8R4X3</accession>
<accession>B6ICZ5</accession>
<accession>Q3TKT7</accession>
<accession>Q7TT14</accession>
<accession>Q8K373</accession>
<accession>Q8R302</accession>
<accession>Q9CS80</accession>
<comment type="subcellular location">
    <subcellularLocation>
        <location evidence="1">Nucleus</location>
    </subcellularLocation>
</comment>
<comment type="sequence caution" evidence="5">
    <conflict type="erroneous initiation">
        <sequence resource="EMBL-CDS" id="AAH27810"/>
    </conflict>
</comment>
<evidence type="ECO:0000250" key="1"/>
<evidence type="ECO:0000250" key="2">
    <source>
        <dbReference type="UniProtKB" id="Q9NTZ6"/>
    </source>
</evidence>
<evidence type="ECO:0000255" key="3">
    <source>
        <dbReference type="PROSITE-ProRule" id="PRU00176"/>
    </source>
</evidence>
<evidence type="ECO:0000256" key="4">
    <source>
        <dbReference type="SAM" id="MobiDB-lite"/>
    </source>
</evidence>
<evidence type="ECO:0000305" key="5"/>
<evidence type="ECO:0007829" key="6">
    <source>
        <dbReference type="PDB" id="2CQP"/>
    </source>
</evidence>
<gene>
    <name type="primary">Rbm12</name>
</gene>
<dbReference type="EMBL" id="AF345334">
    <property type="protein sequence ID" value="AAL83754.1"/>
    <property type="molecule type" value="mRNA"/>
</dbReference>
<dbReference type="EMBL" id="AF393215">
    <property type="protein sequence ID" value="AAM73683.1"/>
    <property type="molecule type" value="mRNA"/>
</dbReference>
<dbReference type="EMBL" id="AF393216">
    <property type="protein sequence ID" value="AAM73684.1"/>
    <property type="molecule type" value="mRNA"/>
</dbReference>
<dbReference type="EMBL" id="AK017591">
    <property type="protein sequence ID" value="BAB30825.1"/>
    <property type="molecule type" value="mRNA"/>
</dbReference>
<dbReference type="EMBL" id="AK029180">
    <property type="protein sequence ID" value="BAC26338.1"/>
    <property type="molecule type" value="mRNA"/>
</dbReference>
<dbReference type="EMBL" id="AK035014">
    <property type="protein sequence ID" value="BAC28911.1"/>
    <property type="molecule type" value="mRNA"/>
</dbReference>
<dbReference type="EMBL" id="AK080772">
    <property type="protein sequence ID" value="BAC38017.1"/>
    <property type="molecule type" value="mRNA"/>
</dbReference>
<dbReference type="EMBL" id="AK166833">
    <property type="protein sequence ID" value="BAE39056.1"/>
    <property type="molecule type" value="mRNA"/>
</dbReference>
<dbReference type="EMBL" id="AL833786">
    <property type="status" value="NOT_ANNOTATED_CDS"/>
    <property type="molecule type" value="Genomic_DNA"/>
</dbReference>
<dbReference type="EMBL" id="BC026891">
    <property type="protein sequence ID" value="AAH26891.2"/>
    <property type="molecule type" value="mRNA"/>
</dbReference>
<dbReference type="EMBL" id="BC027810">
    <property type="protein sequence ID" value="AAH27810.2"/>
    <property type="status" value="ALT_INIT"/>
    <property type="molecule type" value="mRNA"/>
</dbReference>
<dbReference type="EMBL" id="BC052473">
    <property type="protein sequence ID" value="AAH52473.1"/>
    <property type="molecule type" value="mRNA"/>
</dbReference>
<dbReference type="CCDS" id="CCDS16961.1"/>
<dbReference type="RefSeq" id="NP_083673.3">
    <property type="nucleotide sequence ID" value="NM_029397.3"/>
</dbReference>
<dbReference type="RefSeq" id="NP_733486.2">
    <property type="nucleotide sequence ID" value="NM_170598.3"/>
</dbReference>
<dbReference type="PDB" id="2CQP">
    <property type="method" value="NMR"/>
    <property type="chains" value="A=908-992"/>
</dbReference>
<dbReference type="PDBsum" id="2CQP"/>
<dbReference type="SMR" id="Q8R4X3"/>
<dbReference type="BioGRID" id="217686">
    <property type="interactions" value="6"/>
</dbReference>
<dbReference type="FunCoup" id="Q8R4X3">
    <property type="interactions" value="3287"/>
</dbReference>
<dbReference type="IntAct" id="Q8R4X3">
    <property type="interactions" value="2"/>
</dbReference>
<dbReference type="STRING" id="10090.ENSMUSP00000050461"/>
<dbReference type="GlyGen" id="Q8R4X3">
    <property type="glycosylation" value="7 sites, 1 O-linked glycan (7 sites)"/>
</dbReference>
<dbReference type="iPTMnet" id="Q8R4X3"/>
<dbReference type="PhosphoSitePlus" id="Q8R4X3"/>
<dbReference type="jPOST" id="Q8R4X3"/>
<dbReference type="PaxDb" id="10090-ENSMUSP00000050461"/>
<dbReference type="PeptideAtlas" id="Q8R4X3"/>
<dbReference type="ProteomicsDB" id="255036"/>
<dbReference type="Pumba" id="Q8R4X3"/>
<dbReference type="Antibodypedia" id="35036">
    <property type="antibodies" value="149 antibodies from 23 providers"/>
</dbReference>
<dbReference type="DNASU" id="75710"/>
<dbReference type="Ensembl" id="ENSMUST00000059647.12">
    <property type="protein sequence ID" value="ENSMUSP00000050461.6"/>
    <property type="gene ID" value="ENSMUSG00000089824.11"/>
</dbReference>
<dbReference type="Ensembl" id="ENSMUST00000109604.9">
    <property type="protein sequence ID" value="ENSMUSP00000105233.2"/>
    <property type="gene ID" value="ENSMUSG00000089824.11"/>
</dbReference>
<dbReference type="GeneID" id="75710"/>
<dbReference type="KEGG" id="mmu:75710"/>
<dbReference type="UCSC" id="uc008nmh.1">
    <property type="organism name" value="mouse"/>
</dbReference>
<dbReference type="AGR" id="MGI:1922960"/>
<dbReference type="CTD" id="10137"/>
<dbReference type="MGI" id="MGI:1922960">
    <property type="gene designation" value="Rbm12"/>
</dbReference>
<dbReference type="VEuPathDB" id="HostDB:ENSMUSG00000089824"/>
<dbReference type="eggNOG" id="KOG4307">
    <property type="taxonomic scope" value="Eukaryota"/>
</dbReference>
<dbReference type="HOGENOM" id="CLU_004368_1_0_1"/>
<dbReference type="InParanoid" id="Q8R4X3"/>
<dbReference type="OMA" id="VKLMAHC"/>
<dbReference type="OrthoDB" id="2588702at2759"/>
<dbReference type="PhylomeDB" id="Q8R4X3"/>
<dbReference type="TreeFam" id="TF331899"/>
<dbReference type="BioGRID-ORCS" id="75710">
    <property type="hits" value="5 hits in 77 CRISPR screens"/>
</dbReference>
<dbReference type="EvolutionaryTrace" id="Q8R4X3"/>
<dbReference type="PRO" id="PR:Q8R4X3"/>
<dbReference type="Proteomes" id="UP000000589">
    <property type="component" value="Chromosome 2"/>
</dbReference>
<dbReference type="RNAct" id="Q8R4X3">
    <property type="molecule type" value="protein"/>
</dbReference>
<dbReference type="Bgee" id="ENSMUSG00000089824">
    <property type="expression patterns" value="Expressed in primitive streak and 245 other cell types or tissues"/>
</dbReference>
<dbReference type="ExpressionAtlas" id="Q8R4X3">
    <property type="expression patterns" value="baseline and differential"/>
</dbReference>
<dbReference type="GO" id="GO:0005634">
    <property type="term" value="C:nucleus"/>
    <property type="evidence" value="ECO:0007669"/>
    <property type="project" value="UniProtKB-SubCell"/>
</dbReference>
<dbReference type="GO" id="GO:0003723">
    <property type="term" value="F:RNA binding"/>
    <property type="evidence" value="ECO:0007669"/>
    <property type="project" value="UniProtKB-KW"/>
</dbReference>
<dbReference type="CDD" id="cd12745">
    <property type="entry name" value="RRM1_RBM12"/>
    <property type="match status" value="1"/>
</dbReference>
<dbReference type="CDD" id="cd12747">
    <property type="entry name" value="RRM2_RBM12"/>
    <property type="match status" value="1"/>
</dbReference>
<dbReference type="CDD" id="cd12512">
    <property type="entry name" value="RRM3_RBM12"/>
    <property type="match status" value="1"/>
</dbReference>
<dbReference type="CDD" id="cd12749">
    <property type="entry name" value="RRM4_RBM12"/>
    <property type="match status" value="1"/>
</dbReference>
<dbReference type="CDD" id="cd12751">
    <property type="entry name" value="RRM5_RBM12"/>
    <property type="match status" value="1"/>
</dbReference>
<dbReference type="FunFam" id="3.30.70.330:FF:000193">
    <property type="entry name" value="RNA-binding motif protein 12"/>
    <property type="match status" value="1"/>
</dbReference>
<dbReference type="FunFam" id="3.30.70.330:FF:000228">
    <property type="entry name" value="RNA-binding motif protein 12"/>
    <property type="match status" value="1"/>
</dbReference>
<dbReference type="FunFam" id="3.30.70.330:FF:000303">
    <property type="entry name" value="RNA-binding motif protein 12"/>
    <property type="match status" value="1"/>
</dbReference>
<dbReference type="FunFam" id="3.30.70.330:FF:000307">
    <property type="entry name" value="RNA-binding motif protein 12"/>
    <property type="match status" value="1"/>
</dbReference>
<dbReference type="Gene3D" id="3.30.70.330">
    <property type="match status" value="5"/>
</dbReference>
<dbReference type="InterPro" id="IPR050666">
    <property type="entry name" value="ESRP"/>
</dbReference>
<dbReference type="InterPro" id="IPR012677">
    <property type="entry name" value="Nucleotide-bd_a/b_plait_sf"/>
</dbReference>
<dbReference type="InterPro" id="IPR035979">
    <property type="entry name" value="RBD_domain_sf"/>
</dbReference>
<dbReference type="InterPro" id="IPR034591">
    <property type="entry name" value="RBM12_RRM1"/>
</dbReference>
<dbReference type="InterPro" id="IPR034594">
    <property type="entry name" value="RBM12_RRM2"/>
</dbReference>
<dbReference type="InterPro" id="IPR034855">
    <property type="entry name" value="RBM12_RRM3"/>
</dbReference>
<dbReference type="InterPro" id="IPR034856">
    <property type="entry name" value="RBM12_RRM4"/>
</dbReference>
<dbReference type="InterPro" id="IPR034854">
    <property type="entry name" value="RBM12_RRM5"/>
</dbReference>
<dbReference type="InterPro" id="IPR000504">
    <property type="entry name" value="RRM_dom"/>
</dbReference>
<dbReference type="PANTHER" id="PTHR13976">
    <property type="entry name" value="HETEROGENEOUS NUCLEAR RIBONUCLEOPROTEIN-RELATED"/>
    <property type="match status" value="1"/>
</dbReference>
<dbReference type="Pfam" id="PF00076">
    <property type="entry name" value="RRM_1"/>
    <property type="match status" value="3"/>
</dbReference>
<dbReference type="SMART" id="SM00360">
    <property type="entry name" value="RRM"/>
    <property type="match status" value="4"/>
</dbReference>
<dbReference type="SUPFAM" id="SSF54928">
    <property type="entry name" value="RNA-binding domain, RBD"/>
    <property type="match status" value="4"/>
</dbReference>
<dbReference type="PROSITE" id="PS50102">
    <property type="entry name" value="RRM"/>
    <property type="match status" value="3"/>
</dbReference>
<protein>
    <recommendedName>
        <fullName>RNA-binding protein 12</fullName>
    </recommendedName>
    <alternativeName>
        <fullName>RNA-binding motif protein 12</fullName>
    </alternativeName>
    <alternativeName>
        <fullName>SH3/WW domain anchor protein in the nucleus</fullName>
        <shortName>SWAN</shortName>
    </alternativeName>
</protein>
<sequence>MAVVIRLQGLPIVAGTMDIRHFFSGLTIPDGGVHIVGGELGEAFIVFATDEDARLGMMRTGGTIKGSKVTLLLSSKTEMQNMIELSRRRFETANLDIPPANASRSGPPPSSGMSSRVNLPAIVPNFNNPSPSVVTATTSVHESNKNIQTFSTASVGTAPPSMGTSFGSPTFSSTIPSTASPMNTVPPPPIPPIPAMPSLPPLPSIPPIPVPPPVPTLPPVPPVPPIPPVPSVPPMTTLPPMSGMPPLNPPPVAPLPAGMNGSGAPIGLNNNMNPVFLGPLNPVNSIQMNSQSSVKSLPINPDDLYVSVHGMPFSAMENDVREFFHGLRVDAVHLLKDHVGRNNGNGLVKFLSPQDTFEALKRNRMLMIQRYVEVSPATERQWVAAGGHITFKQSMGPSGQAHPPPQTLPRSKSPSGQKRSRSRSPHEAGFCVYLKGLPFEAENKHVIDFFKKLDIVEDSIYIAYGPNGKATGEGFVEFRNDADYKAALCRHKQYMGNRFIQVHPITKKGMLEKIDMIRKRLQNFSYDQRELVLNPEGEVSSAKVCAHITNIPFSITKMDVLQFLEGIPVDESAVHVLVDNNGQGLGQALVQFKTEDDAHKSEHLHRKKLNGREAFVHIVTLEDMREIEKNPPAQGKKGLKISVPGNPAVPVIPSAGMPAAGIPTAGIPGAGLPSAGMPGAGMPSSGMPGPGMPGPGIPGAGIPGPAMPGPAMPGPAMPGPAMPGPAMPGPAMPGPAMPGPAMPGPAIPGPAIPGPAIPGAGIPSAGGEEHVFLTVGSKEANNGPPFNFPGNFGGPNAFGPPLPPPGLGGAFGDVRPVMPSVGNSGLPGLGLEVPGFGGAPNNISGPSGFGGIPQNFGNGPGSLNAPPGFGSGPPGLGSVPGHLSGPPAFGPGPGPGPIHIGGPPGFGASSGKPGPTIIKVQNMPFTVSIDEILDFFYGYQVIPGSVCLKYNEKGMPTGEAMVAFESRDEATAAVIDLNDRPIGSRKVKLVLG</sequence>
<proteinExistence type="evidence at protein level"/>